<accession>A9BXA1</accession>
<name>HIS6_DELAS</name>
<comment type="function">
    <text evidence="1">IGPS catalyzes the conversion of PRFAR and glutamine to IGP, AICAR and glutamate. The HisF subunit catalyzes the cyclization activity that produces IGP and AICAR from PRFAR using the ammonia provided by the HisH subunit.</text>
</comment>
<comment type="catalytic activity">
    <reaction evidence="1">
        <text>5-[(5-phospho-1-deoxy-D-ribulos-1-ylimino)methylamino]-1-(5-phospho-beta-D-ribosyl)imidazole-4-carboxamide + L-glutamine = D-erythro-1-(imidazol-4-yl)glycerol 3-phosphate + 5-amino-1-(5-phospho-beta-D-ribosyl)imidazole-4-carboxamide + L-glutamate + H(+)</text>
        <dbReference type="Rhea" id="RHEA:24793"/>
        <dbReference type="ChEBI" id="CHEBI:15378"/>
        <dbReference type="ChEBI" id="CHEBI:29985"/>
        <dbReference type="ChEBI" id="CHEBI:58278"/>
        <dbReference type="ChEBI" id="CHEBI:58359"/>
        <dbReference type="ChEBI" id="CHEBI:58475"/>
        <dbReference type="ChEBI" id="CHEBI:58525"/>
        <dbReference type="EC" id="4.3.2.10"/>
    </reaction>
</comment>
<comment type="pathway">
    <text evidence="1">Amino-acid biosynthesis; L-histidine biosynthesis; L-histidine from 5-phospho-alpha-D-ribose 1-diphosphate: step 5/9.</text>
</comment>
<comment type="subunit">
    <text evidence="1">Heterodimer of HisH and HisF.</text>
</comment>
<comment type="subcellular location">
    <subcellularLocation>
        <location evidence="1">Cytoplasm</location>
    </subcellularLocation>
</comment>
<comment type="similarity">
    <text evidence="1">Belongs to the HisA/HisF family.</text>
</comment>
<protein>
    <recommendedName>
        <fullName evidence="1">Imidazole glycerol phosphate synthase subunit HisF</fullName>
        <ecNumber evidence="1">4.3.2.10</ecNumber>
    </recommendedName>
    <alternativeName>
        <fullName evidence="1">IGP synthase cyclase subunit</fullName>
    </alternativeName>
    <alternativeName>
        <fullName evidence="1">IGP synthase subunit HisF</fullName>
    </alternativeName>
    <alternativeName>
        <fullName evidence="1">ImGP synthase subunit HisF</fullName>
        <shortName evidence="1">IGPS subunit HisF</shortName>
    </alternativeName>
</protein>
<gene>
    <name evidence="1" type="primary">hisF</name>
    <name type="ordered locus">Daci_5548</name>
</gene>
<evidence type="ECO:0000255" key="1">
    <source>
        <dbReference type="HAMAP-Rule" id="MF_01013"/>
    </source>
</evidence>
<dbReference type="EC" id="4.3.2.10" evidence="1"/>
<dbReference type="EMBL" id="CP000884">
    <property type="protein sequence ID" value="ABX38177.1"/>
    <property type="molecule type" value="Genomic_DNA"/>
</dbReference>
<dbReference type="RefSeq" id="WP_012207346.1">
    <property type="nucleotide sequence ID" value="NC_010002.1"/>
</dbReference>
<dbReference type="SMR" id="A9BXA1"/>
<dbReference type="STRING" id="398578.Daci_5548"/>
<dbReference type="GeneID" id="24116065"/>
<dbReference type="KEGG" id="dac:Daci_5548"/>
<dbReference type="eggNOG" id="COG0107">
    <property type="taxonomic scope" value="Bacteria"/>
</dbReference>
<dbReference type="HOGENOM" id="CLU_048577_4_0_4"/>
<dbReference type="UniPathway" id="UPA00031">
    <property type="reaction ID" value="UER00010"/>
</dbReference>
<dbReference type="Proteomes" id="UP000000784">
    <property type="component" value="Chromosome"/>
</dbReference>
<dbReference type="GO" id="GO:0005737">
    <property type="term" value="C:cytoplasm"/>
    <property type="evidence" value="ECO:0007669"/>
    <property type="project" value="UniProtKB-SubCell"/>
</dbReference>
<dbReference type="GO" id="GO:0000107">
    <property type="term" value="F:imidazoleglycerol-phosphate synthase activity"/>
    <property type="evidence" value="ECO:0007669"/>
    <property type="project" value="UniProtKB-UniRule"/>
</dbReference>
<dbReference type="GO" id="GO:0016829">
    <property type="term" value="F:lyase activity"/>
    <property type="evidence" value="ECO:0007669"/>
    <property type="project" value="UniProtKB-KW"/>
</dbReference>
<dbReference type="GO" id="GO:0000105">
    <property type="term" value="P:L-histidine biosynthetic process"/>
    <property type="evidence" value="ECO:0007669"/>
    <property type="project" value="UniProtKB-UniRule"/>
</dbReference>
<dbReference type="CDD" id="cd04731">
    <property type="entry name" value="HisF"/>
    <property type="match status" value="1"/>
</dbReference>
<dbReference type="FunFam" id="3.20.20.70:FF:000006">
    <property type="entry name" value="Imidazole glycerol phosphate synthase subunit HisF"/>
    <property type="match status" value="1"/>
</dbReference>
<dbReference type="Gene3D" id="3.20.20.70">
    <property type="entry name" value="Aldolase class I"/>
    <property type="match status" value="1"/>
</dbReference>
<dbReference type="HAMAP" id="MF_01013">
    <property type="entry name" value="HisF"/>
    <property type="match status" value="1"/>
</dbReference>
<dbReference type="InterPro" id="IPR013785">
    <property type="entry name" value="Aldolase_TIM"/>
</dbReference>
<dbReference type="InterPro" id="IPR006062">
    <property type="entry name" value="His_biosynth"/>
</dbReference>
<dbReference type="InterPro" id="IPR004651">
    <property type="entry name" value="HisF"/>
</dbReference>
<dbReference type="InterPro" id="IPR050064">
    <property type="entry name" value="IGPS_HisA/HisF"/>
</dbReference>
<dbReference type="InterPro" id="IPR011060">
    <property type="entry name" value="RibuloseP-bd_barrel"/>
</dbReference>
<dbReference type="NCBIfam" id="TIGR00735">
    <property type="entry name" value="hisF"/>
    <property type="match status" value="1"/>
</dbReference>
<dbReference type="PANTHER" id="PTHR21235:SF2">
    <property type="entry name" value="IMIDAZOLE GLYCEROL PHOSPHATE SYNTHASE HISHF"/>
    <property type="match status" value="1"/>
</dbReference>
<dbReference type="PANTHER" id="PTHR21235">
    <property type="entry name" value="IMIDAZOLE GLYCEROL PHOSPHATE SYNTHASE SUBUNIT HISF/H IGP SYNTHASE SUBUNIT HISF/H"/>
    <property type="match status" value="1"/>
</dbReference>
<dbReference type="Pfam" id="PF00977">
    <property type="entry name" value="His_biosynth"/>
    <property type="match status" value="1"/>
</dbReference>
<dbReference type="SUPFAM" id="SSF51366">
    <property type="entry name" value="Ribulose-phoshate binding barrel"/>
    <property type="match status" value="1"/>
</dbReference>
<proteinExistence type="inferred from homology"/>
<sequence>MLAKRIIPCLDVTGGRVVKGVNFVELRDAGDPVEIAARYNAQGADELTFLDITATSDGRDLILPIIESVASQVFIPLTVGGGVRTVEDVRRLLNAGADKTSFNSAAIANPEVINAASDKYGAQCIVVAIDAKRRTAEDEQRMGADGRAAGPGWDVYSHGGRKNTGLDAVQWAAEMARRGAGEILLTSMDRDGTKSGFDLKLTRAVSDAVPVPVIASGGVGSLDDLADGVTLGGADAVLAASIFHYGEFTVGQAKQRMAERGVPVRL</sequence>
<reference key="1">
    <citation type="submission" date="2007-11" db="EMBL/GenBank/DDBJ databases">
        <title>Complete sequence of Delftia acidovorans DSM 14801 / SPH-1.</title>
        <authorList>
            <person name="Copeland A."/>
            <person name="Lucas S."/>
            <person name="Lapidus A."/>
            <person name="Barry K."/>
            <person name="Glavina del Rio T."/>
            <person name="Dalin E."/>
            <person name="Tice H."/>
            <person name="Pitluck S."/>
            <person name="Lowry S."/>
            <person name="Clum A."/>
            <person name="Schmutz J."/>
            <person name="Larimer F."/>
            <person name="Land M."/>
            <person name="Hauser L."/>
            <person name="Kyrpides N."/>
            <person name="Kim E."/>
            <person name="Schleheck D."/>
            <person name="Richardson P."/>
        </authorList>
    </citation>
    <scope>NUCLEOTIDE SEQUENCE [LARGE SCALE GENOMIC DNA]</scope>
    <source>
        <strain>DSM 14801 / SPH-1</strain>
    </source>
</reference>
<keyword id="KW-0028">Amino-acid biosynthesis</keyword>
<keyword id="KW-0963">Cytoplasm</keyword>
<keyword id="KW-0368">Histidine biosynthesis</keyword>
<keyword id="KW-0456">Lyase</keyword>
<keyword id="KW-1185">Reference proteome</keyword>
<organism>
    <name type="scientific">Delftia acidovorans (strain DSM 14801 / SPH-1)</name>
    <dbReference type="NCBI Taxonomy" id="398578"/>
    <lineage>
        <taxon>Bacteria</taxon>
        <taxon>Pseudomonadati</taxon>
        <taxon>Pseudomonadota</taxon>
        <taxon>Betaproteobacteria</taxon>
        <taxon>Burkholderiales</taxon>
        <taxon>Comamonadaceae</taxon>
        <taxon>Delftia</taxon>
    </lineage>
</organism>
<feature type="chain" id="PRO_1000134986" description="Imidazole glycerol phosphate synthase subunit HisF">
    <location>
        <begin position="1"/>
        <end position="266"/>
    </location>
</feature>
<feature type="active site" evidence="1">
    <location>
        <position position="11"/>
    </location>
</feature>
<feature type="active site" evidence="1">
    <location>
        <position position="130"/>
    </location>
</feature>